<sequence>MRSDMIKKGDQQAPARSLLHATGALDKPTDMNKPFVAICNSYIDIVPGHVHLRELADIAKEAIREAGAIPFEFDTIGVDDGIAMGHIGMRYSLPSREIIADAAETVINAHWFDGVFYIPNCDKITPGMLLASVRTNVPAIFCSGGPMKAGLSSEGKALTLSSMFEAVGAFKDGSISKDEFLDMEQNACPTCGSCSGMFTANSMNCLMEVLGLALPYNGTALAVSDQRREMIREAAFKLVDNIKNDLKPKDIVTREAIDDAFALDMAMGGSTNTVLHTLAIANEAGIDYDLTRINEIAKKTPYLSKIAPSSSYSMHDVHEAGGVPAIINELFKKEGTLHPDRITATGKTLRENNEDKEILNSDVIRHLDNPYDKQGGLSILYGNIAPKGAVIKVGGVDPSIKVFKGKAICFDSHDEAVEAIDNHDVREGHVVVIRYEGPKGGPGMPEMLAPTSSIVGRGLGKDVALITDGRFSGATRGIAVGHISPEAAAGGPIGLINDGDEITIDLTNRTLDVNVSTEELDARKQNVKPFKAKVKTGYLARYTALVTSANTGGIMQVPENLI</sequence>
<feature type="chain" id="PRO_0000225426" description="Dihydroxy-acid dehydratase 1">
    <location>
        <begin position="1"/>
        <end position="562"/>
    </location>
</feature>
<feature type="active site" description="Proton acceptor" evidence="1">
    <location>
        <position position="472"/>
    </location>
</feature>
<feature type="binding site" evidence="1">
    <location>
        <position position="80"/>
    </location>
    <ligand>
        <name>Mg(2+)</name>
        <dbReference type="ChEBI" id="CHEBI:18420"/>
    </ligand>
</feature>
<feature type="binding site" evidence="1">
    <location>
        <position position="121"/>
    </location>
    <ligand>
        <name>[2Fe-2S] cluster</name>
        <dbReference type="ChEBI" id="CHEBI:190135"/>
    </ligand>
</feature>
<feature type="binding site" evidence="1">
    <location>
        <position position="122"/>
    </location>
    <ligand>
        <name>Mg(2+)</name>
        <dbReference type="ChEBI" id="CHEBI:18420"/>
    </ligand>
</feature>
<feature type="binding site" description="via carbamate group" evidence="1">
    <location>
        <position position="123"/>
    </location>
    <ligand>
        <name>Mg(2+)</name>
        <dbReference type="ChEBI" id="CHEBI:18420"/>
    </ligand>
</feature>
<feature type="binding site" evidence="1">
    <location>
        <position position="194"/>
    </location>
    <ligand>
        <name>[2Fe-2S] cluster</name>
        <dbReference type="ChEBI" id="CHEBI:190135"/>
    </ligand>
</feature>
<feature type="binding site" evidence="1">
    <location>
        <position position="446"/>
    </location>
    <ligand>
        <name>Mg(2+)</name>
        <dbReference type="ChEBI" id="CHEBI:18420"/>
    </ligand>
</feature>
<feature type="modified residue" description="N6-carboxylysine" evidence="1">
    <location>
        <position position="123"/>
    </location>
</feature>
<comment type="function">
    <text evidence="1">Functions in the biosynthesis of branched-chain amino acids. Catalyzes the dehydration of (2R,3R)-2,3-dihydroxy-3-methylpentanoate (2,3-dihydroxy-3-methylvalerate) into 2-oxo-3-methylpentanoate (2-oxo-3-methylvalerate) and of (2R)-2,3-dihydroxy-3-methylbutanoate (2,3-dihydroxyisovalerate) into 2-oxo-3-methylbutanoate (2-oxoisovalerate), the penultimate precursor to L-isoleucine and L-valine, respectively.</text>
</comment>
<comment type="catalytic activity">
    <reaction evidence="1">
        <text>(2R)-2,3-dihydroxy-3-methylbutanoate = 3-methyl-2-oxobutanoate + H2O</text>
        <dbReference type="Rhea" id="RHEA:24809"/>
        <dbReference type="ChEBI" id="CHEBI:11851"/>
        <dbReference type="ChEBI" id="CHEBI:15377"/>
        <dbReference type="ChEBI" id="CHEBI:49072"/>
        <dbReference type="EC" id="4.2.1.9"/>
    </reaction>
    <physiologicalReaction direction="left-to-right" evidence="1">
        <dbReference type="Rhea" id="RHEA:24810"/>
    </physiologicalReaction>
</comment>
<comment type="catalytic activity">
    <reaction evidence="1">
        <text>(2R,3R)-2,3-dihydroxy-3-methylpentanoate = (S)-3-methyl-2-oxopentanoate + H2O</text>
        <dbReference type="Rhea" id="RHEA:27694"/>
        <dbReference type="ChEBI" id="CHEBI:15377"/>
        <dbReference type="ChEBI" id="CHEBI:35146"/>
        <dbReference type="ChEBI" id="CHEBI:49258"/>
        <dbReference type="EC" id="4.2.1.9"/>
    </reaction>
    <physiologicalReaction direction="left-to-right" evidence="1">
        <dbReference type="Rhea" id="RHEA:27695"/>
    </physiologicalReaction>
</comment>
<comment type="cofactor">
    <cofactor evidence="1">
        <name>[2Fe-2S] cluster</name>
        <dbReference type="ChEBI" id="CHEBI:190135"/>
    </cofactor>
    <text evidence="1">Binds 1 [2Fe-2S] cluster per subunit. This cluster acts as a Lewis acid cofactor.</text>
</comment>
<comment type="cofactor">
    <cofactor evidence="1">
        <name>Mg(2+)</name>
        <dbReference type="ChEBI" id="CHEBI:18420"/>
    </cofactor>
</comment>
<comment type="pathway">
    <text evidence="1">Amino-acid biosynthesis; L-isoleucine biosynthesis; L-isoleucine from 2-oxobutanoate: step 3/4.</text>
</comment>
<comment type="pathway">
    <text evidence="1">Amino-acid biosynthesis; L-valine biosynthesis; L-valine from pyruvate: step 3/4.</text>
</comment>
<comment type="subunit">
    <text evidence="1">Homodimer.</text>
</comment>
<comment type="similarity">
    <text evidence="1">Belongs to the IlvD/Edd family.</text>
</comment>
<proteinExistence type="inferred from homology"/>
<dbReference type="EC" id="4.2.1.9" evidence="1"/>
<dbReference type="EMBL" id="AP008934">
    <property type="protein sequence ID" value="BAE17970.1"/>
    <property type="molecule type" value="Genomic_DNA"/>
</dbReference>
<dbReference type="RefSeq" id="WP_011302716.1">
    <property type="nucleotide sequence ID" value="NC_007350.1"/>
</dbReference>
<dbReference type="SMR" id="Q49Z08"/>
<dbReference type="GeneID" id="3617347"/>
<dbReference type="KEGG" id="ssp:SSP0825"/>
<dbReference type="PATRIC" id="fig|342451.11.peg.827"/>
<dbReference type="eggNOG" id="COG0129">
    <property type="taxonomic scope" value="Bacteria"/>
</dbReference>
<dbReference type="HOGENOM" id="CLU_014271_4_2_9"/>
<dbReference type="OrthoDB" id="9807077at2"/>
<dbReference type="UniPathway" id="UPA00047">
    <property type="reaction ID" value="UER00057"/>
</dbReference>
<dbReference type="UniPathway" id="UPA00049">
    <property type="reaction ID" value="UER00061"/>
</dbReference>
<dbReference type="Proteomes" id="UP000006371">
    <property type="component" value="Chromosome"/>
</dbReference>
<dbReference type="GO" id="GO:0005829">
    <property type="term" value="C:cytosol"/>
    <property type="evidence" value="ECO:0007669"/>
    <property type="project" value="TreeGrafter"/>
</dbReference>
<dbReference type="GO" id="GO:0051537">
    <property type="term" value="F:2 iron, 2 sulfur cluster binding"/>
    <property type="evidence" value="ECO:0007669"/>
    <property type="project" value="UniProtKB-UniRule"/>
</dbReference>
<dbReference type="GO" id="GO:0004160">
    <property type="term" value="F:dihydroxy-acid dehydratase activity"/>
    <property type="evidence" value="ECO:0007669"/>
    <property type="project" value="UniProtKB-UniRule"/>
</dbReference>
<dbReference type="GO" id="GO:0000287">
    <property type="term" value="F:magnesium ion binding"/>
    <property type="evidence" value="ECO:0007669"/>
    <property type="project" value="UniProtKB-UniRule"/>
</dbReference>
<dbReference type="GO" id="GO:0009097">
    <property type="term" value="P:isoleucine biosynthetic process"/>
    <property type="evidence" value="ECO:0007669"/>
    <property type="project" value="UniProtKB-UniRule"/>
</dbReference>
<dbReference type="GO" id="GO:0009099">
    <property type="term" value="P:L-valine biosynthetic process"/>
    <property type="evidence" value="ECO:0007669"/>
    <property type="project" value="UniProtKB-UniRule"/>
</dbReference>
<dbReference type="FunFam" id="3.50.30.80:FF:000001">
    <property type="entry name" value="Dihydroxy-acid dehydratase"/>
    <property type="match status" value="1"/>
</dbReference>
<dbReference type="Gene3D" id="3.50.30.80">
    <property type="entry name" value="IlvD/EDD C-terminal domain-like"/>
    <property type="match status" value="1"/>
</dbReference>
<dbReference type="HAMAP" id="MF_00012">
    <property type="entry name" value="IlvD"/>
    <property type="match status" value="1"/>
</dbReference>
<dbReference type="InterPro" id="IPR042096">
    <property type="entry name" value="Dihydro-acid_dehy_C"/>
</dbReference>
<dbReference type="InterPro" id="IPR004404">
    <property type="entry name" value="DihydroxyA_deHydtase"/>
</dbReference>
<dbReference type="InterPro" id="IPR020558">
    <property type="entry name" value="DiOHA_6PGluconate_deHydtase_CS"/>
</dbReference>
<dbReference type="InterPro" id="IPR056740">
    <property type="entry name" value="ILV_EDD_C"/>
</dbReference>
<dbReference type="InterPro" id="IPR000581">
    <property type="entry name" value="ILV_EDD_N"/>
</dbReference>
<dbReference type="InterPro" id="IPR037237">
    <property type="entry name" value="IlvD/EDD_N"/>
</dbReference>
<dbReference type="NCBIfam" id="TIGR00110">
    <property type="entry name" value="ilvD"/>
    <property type="match status" value="1"/>
</dbReference>
<dbReference type="NCBIfam" id="NF002068">
    <property type="entry name" value="PRK00911.1"/>
    <property type="match status" value="1"/>
</dbReference>
<dbReference type="PANTHER" id="PTHR43661">
    <property type="entry name" value="D-XYLONATE DEHYDRATASE"/>
    <property type="match status" value="1"/>
</dbReference>
<dbReference type="PANTHER" id="PTHR43661:SF3">
    <property type="entry name" value="D-XYLONATE DEHYDRATASE YAGF-RELATED"/>
    <property type="match status" value="1"/>
</dbReference>
<dbReference type="Pfam" id="PF24877">
    <property type="entry name" value="ILV_EDD_C"/>
    <property type="match status" value="1"/>
</dbReference>
<dbReference type="Pfam" id="PF00920">
    <property type="entry name" value="ILVD_EDD_N"/>
    <property type="match status" value="1"/>
</dbReference>
<dbReference type="SUPFAM" id="SSF143975">
    <property type="entry name" value="IlvD/EDD N-terminal domain-like"/>
    <property type="match status" value="1"/>
</dbReference>
<dbReference type="SUPFAM" id="SSF52016">
    <property type="entry name" value="LeuD/IlvD-like"/>
    <property type="match status" value="1"/>
</dbReference>
<dbReference type="PROSITE" id="PS00886">
    <property type="entry name" value="ILVD_EDD_1"/>
    <property type="match status" value="1"/>
</dbReference>
<dbReference type="PROSITE" id="PS00887">
    <property type="entry name" value="ILVD_EDD_2"/>
    <property type="match status" value="1"/>
</dbReference>
<evidence type="ECO:0000255" key="1">
    <source>
        <dbReference type="HAMAP-Rule" id="MF_00012"/>
    </source>
</evidence>
<reference key="1">
    <citation type="journal article" date="2005" name="Proc. Natl. Acad. Sci. U.S.A.">
        <title>Whole genome sequence of Staphylococcus saprophyticus reveals the pathogenesis of uncomplicated urinary tract infection.</title>
        <authorList>
            <person name="Kuroda M."/>
            <person name="Yamashita A."/>
            <person name="Hirakawa H."/>
            <person name="Kumano M."/>
            <person name="Morikawa K."/>
            <person name="Higashide M."/>
            <person name="Maruyama A."/>
            <person name="Inose Y."/>
            <person name="Matoba K."/>
            <person name="Toh H."/>
            <person name="Kuhara S."/>
            <person name="Hattori M."/>
            <person name="Ohta T."/>
        </authorList>
    </citation>
    <scope>NUCLEOTIDE SEQUENCE [LARGE SCALE GENOMIC DNA]</scope>
    <source>
        <strain>ATCC 15305 / DSM 20229 / NCIMB 8711 / NCTC 7292 / S-41</strain>
    </source>
</reference>
<organism>
    <name type="scientific">Staphylococcus saprophyticus subsp. saprophyticus (strain ATCC 15305 / DSM 20229 / NCIMB 8711 / NCTC 7292 / S-41)</name>
    <dbReference type="NCBI Taxonomy" id="342451"/>
    <lineage>
        <taxon>Bacteria</taxon>
        <taxon>Bacillati</taxon>
        <taxon>Bacillota</taxon>
        <taxon>Bacilli</taxon>
        <taxon>Bacillales</taxon>
        <taxon>Staphylococcaceae</taxon>
        <taxon>Staphylococcus</taxon>
    </lineage>
</organism>
<keyword id="KW-0001">2Fe-2S</keyword>
<keyword id="KW-0028">Amino-acid biosynthesis</keyword>
<keyword id="KW-0100">Branched-chain amino acid biosynthesis</keyword>
<keyword id="KW-0408">Iron</keyword>
<keyword id="KW-0411">Iron-sulfur</keyword>
<keyword id="KW-0456">Lyase</keyword>
<keyword id="KW-0460">Magnesium</keyword>
<keyword id="KW-0479">Metal-binding</keyword>
<keyword id="KW-1185">Reference proteome</keyword>
<gene>
    <name evidence="1" type="primary">ilvD1</name>
    <name type="ordered locus">SSP0825</name>
</gene>
<name>ILVD1_STAS1</name>
<protein>
    <recommendedName>
        <fullName evidence="1">Dihydroxy-acid dehydratase 1</fullName>
        <shortName evidence="1">DAD 1</shortName>
        <ecNumber evidence="1">4.2.1.9</ecNumber>
    </recommendedName>
</protein>
<accession>Q49Z08</accession>